<comment type="catalytic activity">
    <reaction evidence="1">
        <text>L-histidinol phosphate + 2-oxoglutarate = 3-(imidazol-4-yl)-2-oxopropyl phosphate + L-glutamate</text>
        <dbReference type="Rhea" id="RHEA:23744"/>
        <dbReference type="ChEBI" id="CHEBI:16810"/>
        <dbReference type="ChEBI" id="CHEBI:29985"/>
        <dbReference type="ChEBI" id="CHEBI:57766"/>
        <dbReference type="ChEBI" id="CHEBI:57980"/>
        <dbReference type="EC" id="2.6.1.9"/>
    </reaction>
</comment>
<comment type="cofactor">
    <cofactor evidence="1">
        <name>pyridoxal 5'-phosphate</name>
        <dbReference type="ChEBI" id="CHEBI:597326"/>
    </cofactor>
</comment>
<comment type="pathway">
    <text evidence="1">Amino-acid biosynthesis; L-histidine biosynthesis; L-histidine from 5-phospho-alpha-D-ribose 1-diphosphate: step 7/9.</text>
</comment>
<comment type="subunit">
    <text evidence="1">Homodimer.</text>
</comment>
<comment type="similarity">
    <text evidence="1">Belongs to the class-II pyridoxal-phosphate-dependent aminotransferase family. Histidinol-phosphate aminotransferase subfamily.</text>
</comment>
<accession>Q7MLS5</accession>
<protein>
    <recommendedName>
        <fullName evidence="1">Histidinol-phosphate aminotransferase</fullName>
        <ecNumber evidence="1">2.6.1.9</ecNumber>
    </recommendedName>
    <alternativeName>
        <fullName evidence="1">Imidazole acetol-phosphate transaminase</fullName>
    </alternativeName>
</protein>
<feature type="chain" id="PRO_0000153478" description="Histidinol-phosphate aminotransferase">
    <location>
        <begin position="1"/>
        <end position="346"/>
    </location>
</feature>
<feature type="modified residue" description="N6-(pyridoxal phosphate)lysine" evidence="1">
    <location>
        <position position="209"/>
    </location>
</feature>
<keyword id="KW-0028">Amino-acid biosynthesis</keyword>
<keyword id="KW-0032">Aminotransferase</keyword>
<keyword id="KW-0368">Histidine biosynthesis</keyword>
<keyword id="KW-0663">Pyridoxal phosphate</keyword>
<keyword id="KW-0808">Transferase</keyword>
<evidence type="ECO:0000255" key="1">
    <source>
        <dbReference type="HAMAP-Rule" id="MF_01023"/>
    </source>
</evidence>
<reference key="1">
    <citation type="journal article" date="2003" name="Genome Res.">
        <title>Comparative genome analysis of Vibrio vulnificus, a marine pathogen.</title>
        <authorList>
            <person name="Chen C.-Y."/>
            <person name="Wu K.-M."/>
            <person name="Chang Y.-C."/>
            <person name="Chang C.-H."/>
            <person name="Tsai H.-C."/>
            <person name="Liao T.-L."/>
            <person name="Liu Y.-M."/>
            <person name="Chen H.-J."/>
            <person name="Shen A.B.-T."/>
            <person name="Li J.-C."/>
            <person name="Su T.-L."/>
            <person name="Shao C.-P."/>
            <person name="Lee C.-T."/>
            <person name="Hor L.-I."/>
            <person name="Tsai S.-F."/>
        </authorList>
    </citation>
    <scope>NUCLEOTIDE SEQUENCE [LARGE SCALE GENOMIC DNA]</scope>
    <source>
        <strain>YJ016</strain>
    </source>
</reference>
<dbReference type="EC" id="2.6.1.9" evidence="1"/>
<dbReference type="EMBL" id="BA000037">
    <property type="protein sequence ID" value="BAC94116.1"/>
    <property type="molecule type" value="Genomic_DNA"/>
</dbReference>
<dbReference type="RefSeq" id="WP_011150021.1">
    <property type="nucleotide sequence ID" value="NC_005139.1"/>
</dbReference>
<dbReference type="SMR" id="Q7MLS5"/>
<dbReference type="STRING" id="672.VV93_v1c12650"/>
<dbReference type="KEGG" id="vvy:VV1352"/>
<dbReference type="eggNOG" id="COG0079">
    <property type="taxonomic scope" value="Bacteria"/>
</dbReference>
<dbReference type="HOGENOM" id="CLU_017584_3_1_6"/>
<dbReference type="UniPathway" id="UPA00031">
    <property type="reaction ID" value="UER00012"/>
</dbReference>
<dbReference type="Proteomes" id="UP000002675">
    <property type="component" value="Chromosome I"/>
</dbReference>
<dbReference type="GO" id="GO:0004400">
    <property type="term" value="F:histidinol-phosphate transaminase activity"/>
    <property type="evidence" value="ECO:0007669"/>
    <property type="project" value="UniProtKB-UniRule"/>
</dbReference>
<dbReference type="GO" id="GO:0030170">
    <property type="term" value="F:pyridoxal phosphate binding"/>
    <property type="evidence" value="ECO:0007669"/>
    <property type="project" value="InterPro"/>
</dbReference>
<dbReference type="GO" id="GO:0000105">
    <property type="term" value="P:L-histidine biosynthetic process"/>
    <property type="evidence" value="ECO:0007669"/>
    <property type="project" value="UniProtKB-UniRule"/>
</dbReference>
<dbReference type="CDD" id="cd00609">
    <property type="entry name" value="AAT_like"/>
    <property type="match status" value="1"/>
</dbReference>
<dbReference type="FunFam" id="3.40.640.10:FF:000032">
    <property type="entry name" value="Histidinol-phosphate aminotransferase"/>
    <property type="match status" value="1"/>
</dbReference>
<dbReference type="Gene3D" id="3.90.1150.10">
    <property type="entry name" value="Aspartate Aminotransferase, domain 1"/>
    <property type="match status" value="1"/>
</dbReference>
<dbReference type="Gene3D" id="3.40.640.10">
    <property type="entry name" value="Type I PLP-dependent aspartate aminotransferase-like (Major domain)"/>
    <property type="match status" value="1"/>
</dbReference>
<dbReference type="HAMAP" id="MF_01023">
    <property type="entry name" value="HisC_aminotrans_2"/>
    <property type="match status" value="1"/>
</dbReference>
<dbReference type="InterPro" id="IPR001917">
    <property type="entry name" value="Aminotrans_II_pyridoxalP_BS"/>
</dbReference>
<dbReference type="InterPro" id="IPR004839">
    <property type="entry name" value="Aminotransferase_I/II_large"/>
</dbReference>
<dbReference type="InterPro" id="IPR005861">
    <property type="entry name" value="HisP_aminotrans"/>
</dbReference>
<dbReference type="InterPro" id="IPR015424">
    <property type="entry name" value="PyrdxlP-dep_Trfase"/>
</dbReference>
<dbReference type="InterPro" id="IPR015421">
    <property type="entry name" value="PyrdxlP-dep_Trfase_major"/>
</dbReference>
<dbReference type="InterPro" id="IPR015422">
    <property type="entry name" value="PyrdxlP-dep_Trfase_small"/>
</dbReference>
<dbReference type="NCBIfam" id="TIGR01141">
    <property type="entry name" value="hisC"/>
    <property type="match status" value="1"/>
</dbReference>
<dbReference type="PANTHER" id="PTHR42885:SF2">
    <property type="entry name" value="HISTIDINOL-PHOSPHATE AMINOTRANSFERASE"/>
    <property type="match status" value="1"/>
</dbReference>
<dbReference type="PANTHER" id="PTHR42885">
    <property type="entry name" value="HISTIDINOL-PHOSPHATE AMINOTRANSFERASE-RELATED"/>
    <property type="match status" value="1"/>
</dbReference>
<dbReference type="Pfam" id="PF00155">
    <property type="entry name" value="Aminotran_1_2"/>
    <property type="match status" value="1"/>
</dbReference>
<dbReference type="SUPFAM" id="SSF53383">
    <property type="entry name" value="PLP-dependent transferases"/>
    <property type="match status" value="1"/>
</dbReference>
<dbReference type="PROSITE" id="PS00599">
    <property type="entry name" value="AA_TRANSFER_CLASS_2"/>
    <property type="match status" value="1"/>
</dbReference>
<proteinExistence type="inferred from homology"/>
<organism>
    <name type="scientific">Vibrio vulnificus (strain YJ016)</name>
    <dbReference type="NCBI Taxonomy" id="196600"/>
    <lineage>
        <taxon>Bacteria</taxon>
        <taxon>Pseudomonadati</taxon>
        <taxon>Pseudomonadota</taxon>
        <taxon>Gammaproteobacteria</taxon>
        <taxon>Vibrionales</taxon>
        <taxon>Vibrionaceae</taxon>
        <taxon>Vibrio</taxon>
    </lineage>
</organism>
<name>HIS8_VIBVY</name>
<gene>
    <name evidence="1" type="primary">hisC</name>
    <name type="ordered locus">VV1352</name>
</gene>
<sequence>MEKLARKSVQKLTPYLSARRIGGTGDVWLNANESPFDNEYRTNFARLNRYSDCQPKALIAAYAAYAGVKPEQTLTSRGADEGIELLIRAFCEPNEDAILYCPPTYGMYSVSAETIGVERKTVPLTEDWQLDLSGIEANLDKVKLVFVCSPNNPTGNLVKREDIIALLEMTKDRAIVVMDEAYIDFCPEASTVDLLAQYSNLAILRTLSKAFALAGLRCGFTLANEELINVLLKVIAPYPVPVPVAEIATQALSEAGLARAKFQVLDLNANRAYLQVGLSMIAGLEVFEGWGNYLLVKFPNGDELFKAAWESGIILRNSPIKDCVRISVGSRDECEKTLGFIRNYYS</sequence>